<name>TAA7B_MOUSE</name>
<proteinExistence type="evidence at transcript level"/>
<keyword id="KW-1003">Cell membrane</keyword>
<keyword id="KW-1015">Disulfide bond</keyword>
<keyword id="KW-0297">G-protein coupled receptor</keyword>
<keyword id="KW-0325">Glycoprotein</keyword>
<keyword id="KW-0472">Membrane</keyword>
<keyword id="KW-0675">Receptor</keyword>
<keyword id="KW-1185">Reference proteome</keyword>
<keyword id="KW-0807">Transducer</keyword>
<keyword id="KW-0812">Transmembrane</keyword>
<keyword id="KW-1133">Transmembrane helix</keyword>
<protein>
    <recommendedName>
        <fullName evidence="9">Trace amine-associated receptor 7b</fullName>
        <shortName evidence="8">TaR-7b</shortName>
        <shortName evidence="8">Trace amine receptor 7b</shortName>
        <shortName evidence="9">mTaar7b</shortName>
    </recommendedName>
</protein>
<organism>
    <name type="scientific">Mus musculus</name>
    <name type="common">Mouse</name>
    <dbReference type="NCBI Taxonomy" id="10090"/>
    <lineage>
        <taxon>Eukaryota</taxon>
        <taxon>Metazoa</taxon>
        <taxon>Chordata</taxon>
        <taxon>Craniata</taxon>
        <taxon>Vertebrata</taxon>
        <taxon>Euteleostomi</taxon>
        <taxon>Mammalia</taxon>
        <taxon>Eutheria</taxon>
        <taxon>Euarchontoglires</taxon>
        <taxon>Glires</taxon>
        <taxon>Rodentia</taxon>
        <taxon>Myomorpha</taxon>
        <taxon>Muroidea</taxon>
        <taxon>Muridae</taxon>
        <taxon>Murinae</taxon>
        <taxon>Mus</taxon>
        <taxon>Mus</taxon>
    </lineage>
</organism>
<evidence type="ECO:0000250" key="1">
    <source>
        <dbReference type="UniProtKB" id="Q5QD04"/>
    </source>
</evidence>
<evidence type="ECO:0000250" key="2">
    <source>
        <dbReference type="UniProtKB" id="Q923X5"/>
    </source>
</evidence>
<evidence type="ECO:0000255" key="3"/>
<evidence type="ECO:0000255" key="4">
    <source>
        <dbReference type="PROSITE-ProRule" id="PRU00521"/>
    </source>
</evidence>
<evidence type="ECO:0000269" key="5">
    <source>
    </source>
</evidence>
<evidence type="ECO:0000269" key="6">
    <source>
    </source>
</evidence>
<evidence type="ECO:0000269" key="7">
    <source>
    </source>
</evidence>
<evidence type="ECO:0000303" key="8">
    <source>
    </source>
</evidence>
<evidence type="ECO:0000303" key="9">
    <source>
    </source>
</evidence>
<evidence type="ECO:0000305" key="10"/>
<evidence type="ECO:0000312" key="11">
    <source>
        <dbReference type="MGI" id="MGI:3527438"/>
    </source>
</evidence>
<sequence>MATDNDSFPWDQDSILSSDMFSATSTELCYENLNRSCVRSPYSPGPRLILYAVFGFGAALAVCGNLLVMTSILHFRQLHSPANFLVVSLACADFLVGLTVMPFSTVRSVEGCWYFGESYCKLHTCFDVSFCYCSIFHLCFISVDRYIAVSDPLTYPTRFTAFVSGKCITFSWLLSTIYGFSLLYTGANEAGLEDLVSALTCVGGCQLAVNQSWVFINFLLFLIPTLVMITVYSKIFLIAKQQAQNIEKMSKQTARASDSYKDRVAKRERKAAKTLGIAVAAFLLSWLPYFIDSIIDAFLGFITPTYVYEILVWIAYYNSAMNPLIYAFFYPWFRKAIKLIVSGKVLRENSSTTNLFPE</sequence>
<comment type="function">
    <text evidence="6 10">Olfactory receptor specific for N,N-dimethylalkylamines trace amines, such as N,N-dimethylcyclohexylamine (PubMed:22545963). Trace amine compounds are enriched in animal body fluids and act on trace amine-associated receptors (TAARs) to elicit both intraspecific and interspecific innate behaviors (PubMed:22545963). Ligand-binding causes a conformation change that triggers signaling via G(s)-class of G alpha proteins (GNAL or GNAS) (Probable).</text>
</comment>
<comment type="subcellular location">
    <subcellularLocation>
        <location evidence="2">Cell membrane</location>
        <topology evidence="3">Multi-pass membrane protein</topology>
    </subcellularLocation>
</comment>
<comment type="tissue specificity">
    <text evidence="5">Specifically expressed in neurons of the olfactory epithelium.</text>
</comment>
<comment type="domain">
    <text evidence="1">In addition to the well known disulfide bond common to G-protein coupled receptor 1 family, trace amine-associated receptors (TAARs) contain an unique disulfide bond (Cys-37-Cys-201) connecting the N-terminus to the extracellular Loop 2 (ECL2), which is required for agonist-induced receptor activation.</text>
</comment>
<comment type="disruption phenotype">
    <text evidence="7">Mice lacking Taar2, Taar3, Taar4, Taar5, Taar6, Taar7a, Taar7b, Taar7d, Taar7e, Taar7f, Taar8a, Taar8b, Taar8c and Taar9 show no visible phenotype or behavioral deficits. They however show an absence of aversion to low concentrations of amines such as 2-phenylethylamine, isopentylamine, N-methylpiperidine and cadaverine.</text>
</comment>
<comment type="similarity">
    <text evidence="4">Belongs to the G-protein coupled receptor 1 family.</text>
</comment>
<reference key="1">
    <citation type="journal article" date="2005" name="Genomics">
        <title>Trace amine-associated receptors form structurally and functionally distinct subfamilies of novel G protein-coupled receptors.</title>
        <authorList>
            <person name="Lindemann L."/>
            <person name="Ebeling M."/>
            <person name="Kratochwil N.A."/>
            <person name="Bunzow J.R."/>
            <person name="Grandy D.K."/>
            <person name="Hoener M.C."/>
        </authorList>
    </citation>
    <scope>NUCLEOTIDE SEQUENCE [GENOMIC DNA]</scope>
    <source>
        <strain>C57BL/6J</strain>
    </source>
</reference>
<reference key="2">
    <citation type="journal article" date="2006" name="Nature">
        <title>A second class of chemosensory receptors in the olfactory epithelium.</title>
        <authorList>
            <person name="Liberles S.D."/>
            <person name="Buck L.B."/>
        </authorList>
    </citation>
    <scope>TISSUE SPECIFICITY</scope>
</reference>
<reference key="3">
    <citation type="journal article" date="2012" name="ACS Chem. Biol.">
        <title>Agonists for 13 trace amine-associated receptors provide insight into the molecular basis of odor selectivity.</title>
        <authorList>
            <person name="Ferrero D.M."/>
            <person name="Wacker D."/>
            <person name="Roque M.A."/>
            <person name="Baldwin M.W."/>
            <person name="Stevens R.C."/>
            <person name="Liberles S.D."/>
        </authorList>
    </citation>
    <scope>FUNCTION</scope>
</reference>
<reference key="4">
    <citation type="journal article" date="2013" name="Nature">
        <title>Non-redundant coding of aversive odours in the main olfactory pathway.</title>
        <authorList>
            <person name="Dewan A."/>
            <person name="Pacifico R."/>
            <person name="Zhan R."/>
            <person name="Rinberg D."/>
            <person name="Bozza T."/>
        </authorList>
    </citation>
    <scope>DISRUPTION PHENOTYPE</scope>
</reference>
<gene>
    <name evidence="9 11" type="primary">Taar7b</name>
    <name evidence="11" type="synonym">Gm698</name>
</gene>
<feature type="chain" id="PRO_0000070164" description="Trace amine-associated receptor 7b">
    <location>
        <begin position="1"/>
        <end position="358"/>
    </location>
</feature>
<feature type="topological domain" description="Extracellular" evidence="3">
    <location>
        <begin position="1"/>
        <end position="47"/>
    </location>
</feature>
<feature type="transmembrane region" description="Helical; Name=1" evidence="3">
    <location>
        <begin position="48"/>
        <end position="68"/>
    </location>
</feature>
<feature type="topological domain" description="Cytoplasmic" evidence="3">
    <location>
        <begin position="69"/>
        <end position="83"/>
    </location>
</feature>
<feature type="transmembrane region" description="Helical; Name=2" evidence="3">
    <location>
        <begin position="84"/>
        <end position="104"/>
    </location>
</feature>
<feature type="topological domain" description="Extracellular" evidence="3">
    <location>
        <begin position="105"/>
        <end position="121"/>
    </location>
</feature>
<feature type="transmembrane region" description="Helical; Name=3" evidence="3">
    <location>
        <begin position="122"/>
        <end position="143"/>
    </location>
</feature>
<feature type="topological domain" description="Cytoplasmic" evidence="3">
    <location>
        <begin position="144"/>
        <end position="166"/>
    </location>
</feature>
<feature type="transmembrane region" description="Helical; Name=4" evidence="3">
    <location>
        <begin position="167"/>
        <end position="187"/>
    </location>
</feature>
<feature type="topological domain" description="Extracellular" evidence="3">
    <location>
        <begin position="188"/>
        <end position="212"/>
    </location>
</feature>
<feature type="transmembrane region" description="Helical; Name=5" evidence="3">
    <location>
        <begin position="213"/>
        <end position="233"/>
    </location>
</feature>
<feature type="topological domain" description="Cytoplasmic" evidence="3">
    <location>
        <begin position="234"/>
        <end position="274"/>
    </location>
</feature>
<feature type="transmembrane region" description="Helical; Name=6" evidence="3">
    <location>
        <begin position="275"/>
        <end position="295"/>
    </location>
</feature>
<feature type="topological domain" description="Extracellular" evidence="3">
    <location>
        <begin position="296"/>
        <end position="309"/>
    </location>
</feature>
<feature type="transmembrane region" description="Helical; Name=7" evidence="3">
    <location>
        <begin position="310"/>
        <end position="333"/>
    </location>
</feature>
<feature type="topological domain" description="Cytoplasmic" evidence="3">
    <location>
        <begin position="334"/>
        <end position="358"/>
    </location>
</feature>
<feature type="glycosylation site" description="N-linked (GlcNAc...) asparagine" evidence="3">
    <location>
        <position position="5"/>
    </location>
</feature>
<feature type="glycosylation site" description="N-linked (GlcNAc...) asparagine" evidence="3">
    <location>
        <position position="34"/>
    </location>
</feature>
<feature type="glycosylation site" description="N-linked (GlcNAc...) asparagine" evidence="3">
    <location>
        <position position="210"/>
    </location>
</feature>
<feature type="disulfide bond" evidence="1">
    <location>
        <begin position="37"/>
        <end position="201"/>
    </location>
</feature>
<feature type="disulfide bond" evidence="4">
    <location>
        <begin position="120"/>
        <end position="205"/>
    </location>
</feature>
<accession>Q5QD11</accession>
<dbReference type="EMBL" id="AY702332">
    <property type="protein sequence ID" value="AAV70142.1"/>
    <property type="molecule type" value="Genomic_DNA"/>
</dbReference>
<dbReference type="CCDS" id="CCDS23741.1"/>
<dbReference type="RefSeq" id="NP_001010827.1">
    <property type="nucleotide sequence ID" value="NM_001010827.1"/>
</dbReference>
<dbReference type="SMR" id="Q5QD11"/>
<dbReference type="FunCoup" id="Q5QD11">
    <property type="interactions" value="524"/>
</dbReference>
<dbReference type="STRING" id="10090.ENSMUSP00000090328"/>
<dbReference type="ChEMBL" id="CHEMBL2176792"/>
<dbReference type="GlyCosmos" id="Q5QD11">
    <property type="glycosylation" value="3 sites, No reported glycans"/>
</dbReference>
<dbReference type="GlyGen" id="Q5QD11">
    <property type="glycosylation" value="3 sites"/>
</dbReference>
<dbReference type="PaxDb" id="10090-ENSMUSP00000090328"/>
<dbReference type="DNASU" id="209517"/>
<dbReference type="Ensembl" id="ENSMUST00000092658.2">
    <property type="protein sequence ID" value="ENSMUSP00000090328.2"/>
    <property type="gene ID" value="ENSMUSG00000095171.2"/>
</dbReference>
<dbReference type="GeneID" id="209517"/>
<dbReference type="KEGG" id="mmu:209517"/>
<dbReference type="UCSC" id="uc007eqk.1">
    <property type="organism name" value="mouse"/>
</dbReference>
<dbReference type="AGR" id="MGI:3527438"/>
<dbReference type="CTD" id="209517"/>
<dbReference type="MGI" id="MGI:3527438">
    <property type="gene designation" value="Taar7b"/>
</dbReference>
<dbReference type="VEuPathDB" id="HostDB:ENSMUSG00000095171"/>
<dbReference type="eggNOG" id="KOG3656">
    <property type="taxonomic scope" value="Eukaryota"/>
</dbReference>
<dbReference type="GeneTree" id="ENSGT00940000160273"/>
<dbReference type="HOGENOM" id="CLU_009579_11_0_1"/>
<dbReference type="InParanoid" id="Q5QD11"/>
<dbReference type="OMA" id="QIAMNQS"/>
<dbReference type="OrthoDB" id="5959645at2759"/>
<dbReference type="PhylomeDB" id="Q5QD11"/>
<dbReference type="TreeFam" id="TF343107"/>
<dbReference type="BioGRID-ORCS" id="209517">
    <property type="hits" value="3 hits in 77 CRISPR screens"/>
</dbReference>
<dbReference type="PRO" id="PR:Q5QD11"/>
<dbReference type="Proteomes" id="UP000000589">
    <property type="component" value="Chromosome 10"/>
</dbReference>
<dbReference type="RNAct" id="Q5QD11">
    <property type="molecule type" value="protein"/>
</dbReference>
<dbReference type="GO" id="GO:0005886">
    <property type="term" value="C:plasma membrane"/>
    <property type="evidence" value="ECO:0007669"/>
    <property type="project" value="UniProtKB-SubCell"/>
</dbReference>
<dbReference type="GO" id="GO:0001594">
    <property type="term" value="F:trace-amine receptor activity"/>
    <property type="evidence" value="ECO:0000314"/>
    <property type="project" value="UniProtKB"/>
</dbReference>
<dbReference type="FunFam" id="1.20.1070.10:FF:000030">
    <property type="entry name" value="trace amine-associated receptor 1"/>
    <property type="match status" value="1"/>
</dbReference>
<dbReference type="Gene3D" id="1.20.1070.10">
    <property type="entry name" value="Rhodopsin 7-helix transmembrane proteins"/>
    <property type="match status" value="1"/>
</dbReference>
<dbReference type="InterPro" id="IPR000276">
    <property type="entry name" value="GPCR_Rhodpsn"/>
</dbReference>
<dbReference type="InterPro" id="IPR017452">
    <property type="entry name" value="GPCR_Rhodpsn_7TM"/>
</dbReference>
<dbReference type="InterPro" id="IPR050569">
    <property type="entry name" value="TAAR"/>
</dbReference>
<dbReference type="InterPro" id="IPR009132">
    <property type="entry name" value="TAAR_fam"/>
</dbReference>
<dbReference type="PANTHER" id="PTHR24249">
    <property type="entry name" value="HISTAMINE RECEPTOR-RELATED G-PROTEIN COUPLED RECEPTOR"/>
    <property type="match status" value="1"/>
</dbReference>
<dbReference type="PANTHER" id="PTHR24249:SF78">
    <property type="entry name" value="TRACE AMINE-ASSOCIATED RECEPTOR 7A-RELATED"/>
    <property type="match status" value="1"/>
</dbReference>
<dbReference type="Pfam" id="PF00001">
    <property type="entry name" value="7tm_1"/>
    <property type="match status" value="1"/>
</dbReference>
<dbReference type="PRINTS" id="PR00237">
    <property type="entry name" value="GPCRRHODOPSN"/>
</dbReference>
<dbReference type="PRINTS" id="PR01830">
    <property type="entry name" value="TRACEAMINER"/>
</dbReference>
<dbReference type="SMART" id="SM01381">
    <property type="entry name" value="7TM_GPCR_Srsx"/>
    <property type="match status" value="1"/>
</dbReference>
<dbReference type="SUPFAM" id="SSF81321">
    <property type="entry name" value="Family A G protein-coupled receptor-like"/>
    <property type="match status" value="1"/>
</dbReference>
<dbReference type="PROSITE" id="PS00237">
    <property type="entry name" value="G_PROTEIN_RECEP_F1_1"/>
    <property type="match status" value="1"/>
</dbReference>
<dbReference type="PROSITE" id="PS50262">
    <property type="entry name" value="G_PROTEIN_RECEP_F1_2"/>
    <property type="match status" value="1"/>
</dbReference>